<name>METAS_SHEPW</name>
<evidence type="ECO:0000255" key="1">
    <source>
        <dbReference type="HAMAP-Rule" id="MF_00295"/>
    </source>
</evidence>
<accession>B8CRT5</accession>
<dbReference type="EC" id="2.3.1.46" evidence="1"/>
<dbReference type="EMBL" id="CP000472">
    <property type="protein sequence ID" value="ACJ30093.1"/>
    <property type="molecule type" value="Genomic_DNA"/>
</dbReference>
<dbReference type="RefSeq" id="WP_020913442.1">
    <property type="nucleotide sequence ID" value="NC_011566.1"/>
</dbReference>
<dbReference type="SMR" id="B8CRT5"/>
<dbReference type="STRING" id="225849.swp_3392"/>
<dbReference type="KEGG" id="swp:swp_3392"/>
<dbReference type="eggNOG" id="COG1897">
    <property type="taxonomic scope" value="Bacteria"/>
</dbReference>
<dbReference type="HOGENOM" id="CLU_057851_0_1_6"/>
<dbReference type="OrthoDB" id="9772423at2"/>
<dbReference type="UniPathway" id="UPA00051">
    <property type="reaction ID" value="UER00075"/>
</dbReference>
<dbReference type="Proteomes" id="UP000000753">
    <property type="component" value="Chromosome"/>
</dbReference>
<dbReference type="GO" id="GO:0005737">
    <property type="term" value="C:cytoplasm"/>
    <property type="evidence" value="ECO:0007669"/>
    <property type="project" value="UniProtKB-SubCell"/>
</dbReference>
<dbReference type="GO" id="GO:0004414">
    <property type="term" value="F:homoserine O-acetyltransferase activity"/>
    <property type="evidence" value="ECO:0007669"/>
    <property type="project" value="UniProtKB-UniRule"/>
</dbReference>
<dbReference type="GO" id="GO:0008899">
    <property type="term" value="F:homoserine O-succinyltransferase activity"/>
    <property type="evidence" value="ECO:0007669"/>
    <property type="project" value="UniProtKB-EC"/>
</dbReference>
<dbReference type="GO" id="GO:0019281">
    <property type="term" value="P:L-methionine biosynthetic process from homoserine via O-succinyl-L-homoserine and cystathionine"/>
    <property type="evidence" value="ECO:0007669"/>
    <property type="project" value="InterPro"/>
</dbReference>
<dbReference type="CDD" id="cd03131">
    <property type="entry name" value="GATase1_HTS"/>
    <property type="match status" value="1"/>
</dbReference>
<dbReference type="FunFam" id="3.40.50.880:FF:000004">
    <property type="entry name" value="Homoserine O-succinyltransferase"/>
    <property type="match status" value="1"/>
</dbReference>
<dbReference type="Gene3D" id="3.40.50.880">
    <property type="match status" value="1"/>
</dbReference>
<dbReference type="HAMAP" id="MF_00295">
    <property type="entry name" value="MetA_acyltransf"/>
    <property type="match status" value="1"/>
</dbReference>
<dbReference type="InterPro" id="IPR029062">
    <property type="entry name" value="Class_I_gatase-like"/>
</dbReference>
<dbReference type="InterPro" id="IPR005697">
    <property type="entry name" value="HST_MetA"/>
</dbReference>
<dbReference type="InterPro" id="IPR033752">
    <property type="entry name" value="MetA_family"/>
</dbReference>
<dbReference type="NCBIfam" id="TIGR01001">
    <property type="entry name" value="metA"/>
    <property type="match status" value="1"/>
</dbReference>
<dbReference type="PANTHER" id="PTHR20919">
    <property type="entry name" value="HOMOSERINE O-SUCCINYLTRANSFERASE"/>
    <property type="match status" value="1"/>
</dbReference>
<dbReference type="PANTHER" id="PTHR20919:SF0">
    <property type="entry name" value="HOMOSERINE O-SUCCINYLTRANSFERASE"/>
    <property type="match status" value="1"/>
</dbReference>
<dbReference type="Pfam" id="PF04204">
    <property type="entry name" value="HTS"/>
    <property type="match status" value="1"/>
</dbReference>
<dbReference type="PIRSF" id="PIRSF000450">
    <property type="entry name" value="H_ser_succinyltr"/>
    <property type="match status" value="1"/>
</dbReference>
<dbReference type="SUPFAM" id="SSF52317">
    <property type="entry name" value="Class I glutamine amidotransferase-like"/>
    <property type="match status" value="1"/>
</dbReference>
<organism>
    <name type="scientific">Shewanella piezotolerans (strain WP3 / JCM 13877)</name>
    <dbReference type="NCBI Taxonomy" id="225849"/>
    <lineage>
        <taxon>Bacteria</taxon>
        <taxon>Pseudomonadati</taxon>
        <taxon>Pseudomonadota</taxon>
        <taxon>Gammaproteobacteria</taxon>
        <taxon>Alteromonadales</taxon>
        <taxon>Shewanellaceae</taxon>
        <taxon>Shewanella</taxon>
    </lineage>
</organism>
<gene>
    <name evidence="1" type="primary">metAS</name>
    <name type="ordered locus">swp_3392</name>
</gene>
<keyword id="KW-0012">Acyltransferase</keyword>
<keyword id="KW-0028">Amino-acid biosynthesis</keyword>
<keyword id="KW-0963">Cytoplasm</keyword>
<keyword id="KW-0486">Methionine biosynthesis</keyword>
<keyword id="KW-0808">Transferase</keyword>
<sequence length="315" mass="36674">MPVKIPDNLPAAEILESENIFVMSETRAANQDIRPMRVLILNLMPNKIETETQLLRLLGNTPLQVDVDLLRIHDKESKHTSIDHMNNFYRDFEQVRNKNYDGLIITGAPLGQIEFEDVSYWDHIREIIDWSQQHVTSVLFLCWAAHAALYHLYGLNRSLLTSKRSGVFAHQRTREHFPLLRGFDDEFYAPHSRFAEMDIEQLRSHPELQVLTESDEAGAYMVLSRSNRNLFVMGHPEYQKSTLKDEYERDLSQGLSPEIPQNYFGNDDPTQQPIARWHSHGSLLVSNWLNYYVYQLTPYNLDDMSGRTPWESAVL</sequence>
<reference key="1">
    <citation type="journal article" date="2008" name="PLoS ONE">
        <title>Environmental adaptation: genomic analysis of the piezotolerant and psychrotolerant deep-sea iron reducing bacterium Shewanella piezotolerans WP3.</title>
        <authorList>
            <person name="Wang F."/>
            <person name="Wang J."/>
            <person name="Jian H."/>
            <person name="Zhang B."/>
            <person name="Li S."/>
            <person name="Wang F."/>
            <person name="Zeng X."/>
            <person name="Gao L."/>
            <person name="Bartlett D.H."/>
            <person name="Yu J."/>
            <person name="Hu S."/>
            <person name="Xiao X."/>
        </authorList>
    </citation>
    <scope>NUCLEOTIDE SEQUENCE [LARGE SCALE GENOMIC DNA]</scope>
    <source>
        <strain>WP3 / JCM 13877</strain>
    </source>
</reference>
<protein>
    <recommendedName>
        <fullName evidence="1">Homoserine O-succinyltransferase</fullName>
        <shortName evidence="1">HST</shortName>
        <ecNumber evidence="1">2.3.1.46</ecNumber>
    </recommendedName>
    <alternativeName>
        <fullName evidence="1">Homoserine transsuccinylase</fullName>
        <shortName evidence="1">HTS</shortName>
    </alternativeName>
</protein>
<feature type="chain" id="PRO_1000119454" description="Homoserine O-succinyltransferase">
    <location>
        <begin position="1"/>
        <end position="315"/>
    </location>
</feature>
<feature type="active site" description="Acyl-thioester intermediate" evidence="1">
    <location>
        <position position="142"/>
    </location>
</feature>
<feature type="active site" description="Proton acceptor" evidence="1">
    <location>
        <position position="235"/>
    </location>
</feature>
<feature type="active site" evidence="1">
    <location>
        <position position="237"/>
    </location>
</feature>
<feature type="binding site" evidence="1">
    <location>
        <position position="163"/>
    </location>
    <ligand>
        <name>substrate</name>
    </ligand>
</feature>
<feature type="binding site" evidence="1">
    <location>
        <position position="192"/>
    </location>
    <ligand>
        <name>substrate</name>
    </ligand>
</feature>
<feature type="binding site" evidence="1">
    <location>
        <position position="249"/>
    </location>
    <ligand>
        <name>substrate</name>
    </ligand>
</feature>
<feature type="site" description="Important for acyl-CoA specificity" evidence="1">
    <location>
        <position position="111"/>
    </location>
</feature>
<feature type="site" description="Important for substrate specificity" evidence="1">
    <location>
        <position position="192"/>
    </location>
</feature>
<comment type="function">
    <text evidence="1">Transfers a succinyl group from succinyl-CoA to L-homoserine, forming succinyl-L-homoserine.</text>
</comment>
<comment type="catalytic activity">
    <reaction evidence="1">
        <text>L-homoserine + succinyl-CoA = O-succinyl-L-homoserine + CoA</text>
        <dbReference type="Rhea" id="RHEA:22008"/>
        <dbReference type="ChEBI" id="CHEBI:57287"/>
        <dbReference type="ChEBI" id="CHEBI:57292"/>
        <dbReference type="ChEBI" id="CHEBI:57476"/>
        <dbReference type="ChEBI" id="CHEBI:57661"/>
        <dbReference type="EC" id="2.3.1.46"/>
    </reaction>
</comment>
<comment type="pathway">
    <text evidence="1">Amino-acid biosynthesis; L-methionine biosynthesis via de novo pathway; O-succinyl-L-homoserine from L-homoserine: step 1/1.</text>
</comment>
<comment type="subcellular location">
    <subcellularLocation>
        <location evidence="1">Cytoplasm</location>
    </subcellularLocation>
</comment>
<comment type="similarity">
    <text evidence="1">Belongs to the MetA family.</text>
</comment>
<proteinExistence type="inferred from homology"/>